<evidence type="ECO:0000255" key="1">
    <source>
        <dbReference type="HAMAP-Rule" id="MF_00141"/>
    </source>
</evidence>
<protein>
    <recommendedName>
        <fullName evidence="1">Elongation factor P</fullName>
        <shortName evidence="1">EF-P</shortName>
    </recommendedName>
</protein>
<comment type="function">
    <text evidence="1">Involved in peptide bond synthesis. Stimulates efficient translation and peptide-bond synthesis on native or reconstituted 70S ribosomes in vitro. Probably functions indirectly by altering the affinity of the ribosome for aminoacyl-tRNA, thus increasing their reactivity as acceptors for peptidyl transferase.</text>
</comment>
<comment type="pathway">
    <text evidence="1">Protein biosynthesis; polypeptide chain elongation.</text>
</comment>
<comment type="subcellular location">
    <subcellularLocation>
        <location evidence="1">Cytoplasm</location>
    </subcellularLocation>
</comment>
<comment type="similarity">
    <text evidence="1">Belongs to the elongation factor P family.</text>
</comment>
<keyword id="KW-0963">Cytoplasm</keyword>
<keyword id="KW-0251">Elongation factor</keyword>
<keyword id="KW-0648">Protein biosynthesis</keyword>
<keyword id="KW-1185">Reference proteome</keyword>
<proteinExistence type="inferred from homology"/>
<name>EFP_PARXL</name>
<feature type="chain" id="PRO_1000010706" description="Elongation factor P">
    <location>
        <begin position="1"/>
        <end position="185"/>
    </location>
</feature>
<accession>Q13VN6</accession>
<reference key="1">
    <citation type="journal article" date="2006" name="Proc. Natl. Acad. Sci. U.S.A.">
        <title>Burkholderia xenovorans LB400 harbors a multi-replicon, 9.73-Mbp genome shaped for versatility.</title>
        <authorList>
            <person name="Chain P.S.G."/>
            <person name="Denef V.J."/>
            <person name="Konstantinidis K.T."/>
            <person name="Vergez L.M."/>
            <person name="Agullo L."/>
            <person name="Reyes V.L."/>
            <person name="Hauser L."/>
            <person name="Cordova M."/>
            <person name="Gomez L."/>
            <person name="Gonzalez M."/>
            <person name="Land M."/>
            <person name="Lao V."/>
            <person name="Larimer F."/>
            <person name="LiPuma J.J."/>
            <person name="Mahenthiralingam E."/>
            <person name="Malfatti S.A."/>
            <person name="Marx C.J."/>
            <person name="Parnell J.J."/>
            <person name="Ramette A."/>
            <person name="Richardson P."/>
            <person name="Seeger M."/>
            <person name="Smith D."/>
            <person name="Spilker T."/>
            <person name="Sul W.J."/>
            <person name="Tsoi T.V."/>
            <person name="Ulrich L.E."/>
            <person name="Zhulin I.B."/>
            <person name="Tiedje J.M."/>
        </authorList>
    </citation>
    <scope>NUCLEOTIDE SEQUENCE [LARGE SCALE GENOMIC DNA]</scope>
    <source>
        <strain>LB400</strain>
    </source>
</reference>
<organism>
    <name type="scientific">Paraburkholderia xenovorans (strain LB400)</name>
    <dbReference type="NCBI Taxonomy" id="266265"/>
    <lineage>
        <taxon>Bacteria</taxon>
        <taxon>Pseudomonadati</taxon>
        <taxon>Pseudomonadota</taxon>
        <taxon>Betaproteobacteria</taxon>
        <taxon>Burkholderiales</taxon>
        <taxon>Burkholderiaceae</taxon>
        <taxon>Paraburkholderia</taxon>
    </lineage>
</organism>
<dbReference type="EMBL" id="CP000270">
    <property type="protein sequence ID" value="ABE31853.1"/>
    <property type="molecule type" value="Genomic_DNA"/>
</dbReference>
<dbReference type="RefSeq" id="WP_011489376.1">
    <property type="nucleotide sequence ID" value="NC_007951.1"/>
</dbReference>
<dbReference type="SMR" id="Q13VN6"/>
<dbReference type="STRING" id="266265.Bxe_A1093"/>
<dbReference type="KEGG" id="bxb:DR64_3256"/>
<dbReference type="KEGG" id="bxe:Bxe_A1093"/>
<dbReference type="PATRIC" id="fig|266265.5.peg.3480"/>
<dbReference type="eggNOG" id="COG0231">
    <property type="taxonomic scope" value="Bacteria"/>
</dbReference>
<dbReference type="OrthoDB" id="9801844at2"/>
<dbReference type="UniPathway" id="UPA00345"/>
<dbReference type="Proteomes" id="UP000001817">
    <property type="component" value="Chromosome 1"/>
</dbReference>
<dbReference type="GO" id="GO:0005737">
    <property type="term" value="C:cytoplasm"/>
    <property type="evidence" value="ECO:0007669"/>
    <property type="project" value="UniProtKB-SubCell"/>
</dbReference>
<dbReference type="GO" id="GO:0003746">
    <property type="term" value="F:translation elongation factor activity"/>
    <property type="evidence" value="ECO:0007669"/>
    <property type="project" value="UniProtKB-UniRule"/>
</dbReference>
<dbReference type="GO" id="GO:0043043">
    <property type="term" value="P:peptide biosynthetic process"/>
    <property type="evidence" value="ECO:0007669"/>
    <property type="project" value="InterPro"/>
</dbReference>
<dbReference type="CDD" id="cd04470">
    <property type="entry name" value="S1_EF-P_repeat_1"/>
    <property type="match status" value="1"/>
</dbReference>
<dbReference type="CDD" id="cd05794">
    <property type="entry name" value="S1_EF-P_repeat_2"/>
    <property type="match status" value="1"/>
</dbReference>
<dbReference type="FunFam" id="2.30.30.30:FF:000003">
    <property type="entry name" value="Elongation factor P"/>
    <property type="match status" value="1"/>
</dbReference>
<dbReference type="FunFam" id="2.40.50.140:FF:000004">
    <property type="entry name" value="Elongation factor P"/>
    <property type="match status" value="1"/>
</dbReference>
<dbReference type="FunFam" id="2.40.50.140:FF:000009">
    <property type="entry name" value="Elongation factor P"/>
    <property type="match status" value="1"/>
</dbReference>
<dbReference type="Gene3D" id="2.30.30.30">
    <property type="match status" value="1"/>
</dbReference>
<dbReference type="Gene3D" id="2.40.50.140">
    <property type="entry name" value="Nucleic acid-binding proteins"/>
    <property type="match status" value="2"/>
</dbReference>
<dbReference type="HAMAP" id="MF_00141">
    <property type="entry name" value="EF_P"/>
    <property type="match status" value="1"/>
</dbReference>
<dbReference type="InterPro" id="IPR015365">
    <property type="entry name" value="Elong-fact-P_C"/>
</dbReference>
<dbReference type="InterPro" id="IPR012340">
    <property type="entry name" value="NA-bd_OB-fold"/>
</dbReference>
<dbReference type="InterPro" id="IPR014722">
    <property type="entry name" value="Rib_uL2_dom2"/>
</dbReference>
<dbReference type="InterPro" id="IPR020599">
    <property type="entry name" value="Transl_elong_fac_P/YeiP"/>
</dbReference>
<dbReference type="InterPro" id="IPR013185">
    <property type="entry name" value="Transl_elong_KOW-like"/>
</dbReference>
<dbReference type="InterPro" id="IPR001059">
    <property type="entry name" value="Transl_elong_P/YeiP_cen"/>
</dbReference>
<dbReference type="InterPro" id="IPR013852">
    <property type="entry name" value="Transl_elong_P/YeiP_CS"/>
</dbReference>
<dbReference type="InterPro" id="IPR011768">
    <property type="entry name" value="Transl_elongation_fac_P"/>
</dbReference>
<dbReference type="InterPro" id="IPR008991">
    <property type="entry name" value="Translation_prot_SH3-like_sf"/>
</dbReference>
<dbReference type="NCBIfam" id="TIGR00038">
    <property type="entry name" value="efp"/>
    <property type="match status" value="1"/>
</dbReference>
<dbReference type="NCBIfam" id="NF001810">
    <property type="entry name" value="PRK00529.1"/>
    <property type="match status" value="1"/>
</dbReference>
<dbReference type="PANTHER" id="PTHR30053">
    <property type="entry name" value="ELONGATION FACTOR P"/>
    <property type="match status" value="1"/>
</dbReference>
<dbReference type="PANTHER" id="PTHR30053:SF12">
    <property type="entry name" value="ELONGATION FACTOR P (EF-P) FAMILY PROTEIN"/>
    <property type="match status" value="1"/>
</dbReference>
<dbReference type="Pfam" id="PF01132">
    <property type="entry name" value="EFP"/>
    <property type="match status" value="1"/>
</dbReference>
<dbReference type="Pfam" id="PF08207">
    <property type="entry name" value="EFP_N"/>
    <property type="match status" value="1"/>
</dbReference>
<dbReference type="Pfam" id="PF09285">
    <property type="entry name" value="Elong-fact-P_C"/>
    <property type="match status" value="1"/>
</dbReference>
<dbReference type="PIRSF" id="PIRSF005901">
    <property type="entry name" value="EF-P"/>
    <property type="match status" value="1"/>
</dbReference>
<dbReference type="SMART" id="SM01185">
    <property type="entry name" value="EFP"/>
    <property type="match status" value="1"/>
</dbReference>
<dbReference type="SMART" id="SM00841">
    <property type="entry name" value="Elong-fact-P_C"/>
    <property type="match status" value="1"/>
</dbReference>
<dbReference type="SUPFAM" id="SSF50249">
    <property type="entry name" value="Nucleic acid-binding proteins"/>
    <property type="match status" value="2"/>
</dbReference>
<dbReference type="SUPFAM" id="SSF50104">
    <property type="entry name" value="Translation proteins SH3-like domain"/>
    <property type="match status" value="1"/>
</dbReference>
<dbReference type="PROSITE" id="PS01275">
    <property type="entry name" value="EFP"/>
    <property type="match status" value="1"/>
</dbReference>
<gene>
    <name evidence="1" type="primary">efp</name>
    <name type="ordered locus">Bxeno_A3315</name>
    <name type="ORF">Bxe_A1093</name>
</gene>
<sequence>MKTAQELRTGNVVMIGADAMVVQKAEYNKSGRNSAVVKMKFKNLLTGAGMESVYKADDKFDVVVLERKEVTYSYFADPMYVFMDADYNQFEVESEMMGDALHYLEDGMACEVVFYNDKAISVELPTTLVREIIYTEPAVKGDTSSGKVLKNAKLNTGFELQVPLFCNIGDKIEIDTRTHEYRSRA</sequence>